<accession>O34961</accession>
<feature type="chain" id="PRO_0000170771" description="Uncharacterized symporter YjmB">
    <location>
        <begin position="1"/>
        <end position="459"/>
    </location>
</feature>
<feature type="transmembrane region" description="Helical" evidence="1">
    <location>
        <begin position="25"/>
        <end position="45"/>
    </location>
</feature>
<feature type="transmembrane region" description="Helical" evidence="1">
    <location>
        <begin position="52"/>
        <end position="72"/>
    </location>
</feature>
<feature type="transmembrane region" description="Helical" evidence="1">
    <location>
        <begin position="95"/>
        <end position="115"/>
    </location>
</feature>
<feature type="transmembrane region" description="Helical" evidence="1">
    <location>
        <begin position="123"/>
        <end position="143"/>
    </location>
</feature>
<feature type="transmembrane region" description="Helical" evidence="1">
    <location>
        <begin position="167"/>
        <end position="187"/>
    </location>
</feature>
<feature type="transmembrane region" description="Helical" evidence="1">
    <location>
        <begin position="192"/>
        <end position="212"/>
    </location>
</feature>
<feature type="transmembrane region" description="Helical" evidence="1">
    <location>
        <begin position="249"/>
        <end position="269"/>
    </location>
</feature>
<feature type="transmembrane region" description="Helical" evidence="1">
    <location>
        <begin position="279"/>
        <end position="299"/>
    </location>
</feature>
<feature type="transmembrane region" description="Helical" evidence="1">
    <location>
        <begin position="310"/>
        <end position="330"/>
    </location>
</feature>
<feature type="transmembrane region" description="Helical" evidence="1">
    <location>
        <begin position="332"/>
        <end position="352"/>
    </location>
</feature>
<feature type="transmembrane region" description="Helical" evidence="1">
    <location>
        <begin position="389"/>
        <end position="409"/>
    </location>
</feature>
<feature type="transmembrane region" description="Helical" evidence="1">
    <location>
        <begin position="420"/>
        <end position="440"/>
    </location>
</feature>
<proteinExistence type="evidence at transcript level"/>
<evidence type="ECO:0000255" key="1"/>
<evidence type="ECO:0000305" key="2"/>
<evidence type="ECO:0000305" key="3">
    <source>
    </source>
</evidence>
<comment type="subcellular location">
    <subcellularLocation>
        <location evidence="2">Cell membrane</location>
        <topology evidence="2">Multi-pass membrane protein</topology>
    </subcellularLocation>
</comment>
<comment type="induction">
    <text evidence="3">Induced by galacturonate, repressed by glucose.</text>
</comment>
<comment type="miscellaneous">
    <text>Member of the exu locus which is required for galacturonate utilization.</text>
</comment>
<comment type="similarity">
    <text evidence="2">Belongs to the sodium:galactoside symporter (TC 2.A.2) family.</text>
</comment>
<dbReference type="EMBL" id="AF015825">
    <property type="protein sequence ID" value="AAC46327.1"/>
    <property type="molecule type" value="Genomic_DNA"/>
</dbReference>
<dbReference type="EMBL" id="AL009126">
    <property type="protein sequence ID" value="CAB13088.1"/>
    <property type="molecule type" value="Genomic_DNA"/>
</dbReference>
<dbReference type="PIR" id="D69852">
    <property type="entry name" value="D69852"/>
</dbReference>
<dbReference type="RefSeq" id="WP_003245721.1">
    <property type="nucleotide sequence ID" value="NZ_OZ025638.1"/>
</dbReference>
<dbReference type="SMR" id="O34961"/>
<dbReference type="FunCoup" id="O34961">
    <property type="interactions" value="168"/>
</dbReference>
<dbReference type="IntAct" id="O34961">
    <property type="interactions" value="2"/>
</dbReference>
<dbReference type="STRING" id="224308.BSU12310"/>
<dbReference type="PaxDb" id="224308-BSU12310"/>
<dbReference type="EnsemblBacteria" id="CAB13088">
    <property type="protein sequence ID" value="CAB13088"/>
    <property type="gene ID" value="BSU_12310"/>
</dbReference>
<dbReference type="GeneID" id="939410"/>
<dbReference type="KEGG" id="bsu:BSU12310"/>
<dbReference type="PATRIC" id="fig|224308.179.peg.1332"/>
<dbReference type="eggNOG" id="COG2211">
    <property type="taxonomic scope" value="Bacteria"/>
</dbReference>
<dbReference type="InParanoid" id="O34961"/>
<dbReference type="OrthoDB" id="9764596at2"/>
<dbReference type="PhylomeDB" id="O34961"/>
<dbReference type="BioCyc" id="BSUB:BSU12310-MONOMER"/>
<dbReference type="Proteomes" id="UP000001570">
    <property type="component" value="Chromosome"/>
</dbReference>
<dbReference type="GO" id="GO:0005886">
    <property type="term" value="C:plasma membrane"/>
    <property type="evidence" value="ECO:0000318"/>
    <property type="project" value="GO_Central"/>
</dbReference>
<dbReference type="GO" id="GO:0015293">
    <property type="term" value="F:symporter activity"/>
    <property type="evidence" value="ECO:0007669"/>
    <property type="project" value="UniProtKB-KW"/>
</dbReference>
<dbReference type="GO" id="GO:0008643">
    <property type="term" value="P:carbohydrate transport"/>
    <property type="evidence" value="ECO:0007669"/>
    <property type="project" value="InterPro"/>
</dbReference>
<dbReference type="GO" id="GO:0006814">
    <property type="term" value="P:sodium ion transport"/>
    <property type="evidence" value="ECO:0007669"/>
    <property type="project" value="InterPro"/>
</dbReference>
<dbReference type="GO" id="GO:0055085">
    <property type="term" value="P:transmembrane transport"/>
    <property type="evidence" value="ECO:0000318"/>
    <property type="project" value="GO_Central"/>
</dbReference>
<dbReference type="CDD" id="cd17332">
    <property type="entry name" value="MFS_MelB_like"/>
    <property type="match status" value="1"/>
</dbReference>
<dbReference type="Gene3D" id="1.20.1250.20">
    <property type="entry name" value="MFS general substrate transporter like domains"/>
    <property type="match status" value="1"/>
</dbReference>
<dbReference type="InterPro" id="IPR039672">
    <property type="entry name" value="MFS_2"/>
</dbReference>
<dbReference type="InterPro" id="IPR020846">
    <property type="entry name" value="MFS_dom"/>
</dbReference>
<dbReference type="InterPro" id="IPR036259">
    <property type="entry name" value="MFS_trans_sf"/>
</dbReference>
<dbReference type="InterPro" id="IPR001927">
    <property type="entry name" value="Na/Gal_symport"/>
</dbReference>
<dbReference type="InterPro" id="IPR018043">
    <property type="entry name" value="Na/Gal_symport_CS"/>
</dbReference>
<dbReference type="NCBIfam" id="TIGR00792">
    <property type="entry name" value="gph"/>
    <property type="match status" value="1"/>
</dbReference>
<dbReference type="PANTHER" id="PTHR11328:SF24">
    <property type="entry name" value="MAJOR FACILITATOR SUPERFAMILY (MFS) PROFILE DOMAIN-CONTAINING PROTEIN"/>
    <property type="match status" value="1"/>
</dbReference>
<dbReference type="PANTHER" id="PTHR11328">
    <property type="entry name" value="MAJOR FACILITATOR SUPERFAMILY DOMAIN-CONTAINING PROTEIN"/>
    <property type="match status" value="1"/>
</dbReference>
<dbReference type="Pfam" id="PF13347">
    <property type="entry name" value="MFS_2"/>
    <property type="match status" value="1"/>
</dbReference>
<dbReference type="SUPFAM" id="SSF103473">
    <property type="entry name" value="MFS general substrate transporter"/>
    <property type="match status" value="1"/>
</dbReference>
<dbReference type="PROSITE" id="PS50850">
    <property type="entry name" value="MFS"/>
    <property type="match status" value="1"/>
</dbReference>
<dbReference type="PROSITE" id="PS00872">
    <property type="entry name" value="NA_GALACTOSIDE_SYMP"/>
    <property type="match status" value="1"/>
</dbReference>
<reference key="1">
    <citation type="journal article" date="1998" name="Microbiology">
        <title>A 35.7 kb DNA fragment from the Bacillus subtilis chromosome containing a putative 12.3 kb operon involved in hexuronate catabolism and a perfectly symmetrical hypothetical catabolite-responsive element.</title>
        <authorList>
            <person name="Rivolta C."/>
            <person name="Soldo B."/>
            <person name="Lazarevic V."/>
            <person name="Joris B."/>
            <person name="Mauel C."/>
            <person name="Karamata D."/>
        </authorList>
    </citation>
    <scope>NUCLEOTIDE SEQUENCE [GENOMIC DNA]</scope>
    <scope>PROBABLE OPERON STRUCTURE</scope>
    <source>
        <strain>168</strain>
    </source>
</reference>
<reference key="2">
    <citation type="journal article" date="1997" name="Nature">
        <title>The complete genome sequence of the Gram-positive bacterium Bacillus subtilis.</title>
        <authorList>
            <person name="Kunst F."/>
            <person name="Ogasawara N."/>
            <person name="Moszer I."/>
            <person name="Albertini A.M."/>
            <person name="Alloni G."/>
            <person name="Azevedo V."/>
            <person name="Bertero M.G."/>
            <person name="Bessieres P."/>
            <person name="Bolotin A."/>
            <person name="Borchert S."/>
            <person name="Borriss R."/>
            <person name="Boursier L."/>
            <person name="Brans A."/>
            <person name="Braun M."/>
            <person name="Brignell S.C."/>
            <person name="Bron S."/>
            <person name="Brouillet S."/>
            <person name="Bruschi C.V."/>
            <person name="Caldwell B."/>
            <person name="Capuano V."/>
            <person name="Carter N.M."/>
            <person name="Choi S.-K."/>
            <person name="Codani J.-J."/>
            <person name="Connerton I.F."/>
            <person name="Cummings N.J."/>
            <person name="Daniel R.A."/>
            <person name="Denizot F."/>
            <person name="Devine K.M."/>
            <person name="Duesterhoeft A."/>
            <person name="Ehrlich S.D."/>
            <person name="Emmerson P.T."/>
            <person name="Entian K.-D."/>
            <person name="Errington J."/>
            <person name="Fabret C."/>
            <person name="Ferrari E."/>
            <person name="Foulger D."/>
            <person name="Fritz C."/>
            <person name="Fujita M."/>
            <person name="Fujita Y."/>
            <person name="Fuma S."/>
            <person name="Galizzi A."/>
            <person name="Galleron N."/>
            <person name="Ghim S.-Y."/>
            <person name="Glaser P."/>
            <person name="Goffeau A."/>
            <person name="Golightly E.J."/>
            <person name="Grandi G."/>
            <person name="Guiseppi G."/>
            <person name="Guy B.J."/>
            <person name="Haga K."/>
            <person name="Haiech J."/>
            <person name="Harwood C.R."/>
            <person name="Henaut A."/>
            <person name="Hilbert H."/>
            <person name="Holsappel S."/>
            <person name="Hosono S."/>
            <person name="Hullo M.-F."/>
            <person name="Itaya M."/>
            <person name="Jones L.-M."/>
            <person name="Joris B."/>
            <person name="Karamata D."/>
            <person name="Kasahara Y."/>
            <person name="Klaerr-Blanchard M."/>
            <person name="Klein C."/>
            <person name="Kobayashi Y."/>
            <person name="Koetter P."/>
            <person name="Koningstein G."/>
            <person name="Krogh S."/>
            <person name="Kumano M."/>
            <person name="Kurita K."/>
            <person name="Lapidus A."/>
            <person name="Lardinois S."/>
            <person name="Lauber J."/>
            <person name="Lazarevic V."/>
            <person name="Lee S.-M."/>
            <person name="Levine A."/>
            <person name="Liu H."/>
            <person name="Masuda S."/>
            <person name="Mauel C."/>
            <person name="Medigue C."/>
            <person name="Medina N."/>
            <person name="Mellado R.P."/>
            <person name="Mizuno M."/>
            <person name="Moestl D."/>
            <person name="Nakai S."/>
            <person name="Noback M."/>
            <person name="Noone D."/>
            <person name="O'Reilly M."/>
            <person name="Ogawa K."/>
            <person name="Ogiwara A."/>
            <person name="Oudega B."/>
            <person name="Park S.-H."/>
            <person name="Parro V."/>
            <person name="Pohl T.M."/>
            <person name="Portetelle D."/>
            <person name="Porwollik S."/>
            <person name="Prescott A.M."/>
            <person name="Presecan E."/>
            <person name="Pujic P."/>
            <person name="Purnelle B."/>
            <person name="Rapoport G."/>
            <person name="Rey M."/>
            <person name="Reynolds S."/>
            <person name="Rieger M."/>
            <person name="Rivolta C."/>
            <person name="Rocha E."/>
            <person name="Roche B."/>
            <person name="Rose M."/>
            <person name="Sadaie Y."/>
            <person name="Sato T."/>
            <person name="Scanlan E."/>
            <person name="Schleich S."/>
            <person name="Schroeter R."/>
            <person name="Scoffone F."/>
            <person name="Sekiguchi J."/>
            <person name="Sekowska A."/>
            <person name="Seror S.J."/>
            <person name="Serror P."/>
            <person name="Shin B.-S."/>
            <person name="Soldo B."/>
            <person name="Sorokin A."/>
            <person name="Tacconi E."/>
            <person name="Takagi T."/>
            <person name="Takahashi H."/>
            <person name="Takemaru K."/>
            <person name="Takeuchi M."/>
            <person name="Tamakoshi A."/>
            <person name="Tanaka T."/>
            <person name="Terpstra P."/>
            <person name="Tognoni A."/>
            <person name="Tosato V."/>
            <person name="Uchiyama S."/>
            <person name="Vandenbol M."/>
            <person name="Vannier F."/>
            <person name="Vassarotti A."/>
            <person name="Viari A."/>
            <person name="Wambutt R."/>
            <person name="Wedler E."/>
            <person name="Wedler H."/>
            <person name="Weitzenegger T."/>
            <person name="Winters P."/>
            <person name="Wipat A."/>
            <person name="Yamamoto H."/>
            <person name="Yamane K."/>
            <person name="Yasumoto K."/>
            <person name="Yata K."/>
            <person name="Yoshida K."/>
            <person name="Yoshikawa H.-F."/>
            <person name="Zumstein E."/>
            <person name="Yoshikawa H."/>
            <person name="Danchin A."/>
        </authorList>
    </citation>
    <scope>NUCLEOTIDE SEQUENCE [LARGE SCALE GENOMIC DNA]</scope>
    <source>
        <strain>168</strain>
    </source>
</reference>
<reference key="3">
    <citation type="journal article" date="1999" name="J. Bacteriol.">
        <title>Regulation of hexuronate utilization in Bacillus subtilis.</title>
        <authorList>
            <person name="Mekjian K.R."/>
            <person name="Bryan E.M."/>
            <person name="Beall B.W."/>
            <person name="Moran C.P. Jr."/>
        </authorList>
    </citation>
    <scope>PROBABLE OPERON STRUCTURE</scope>
    <scope>INDUCTION</scope>
    <source>
        <strain>168 / MB24</strain>
    </source>
</reference>
<protein>
    <recommendedName>
        <fullName>Uncharacterized symporter YjmB</fullName>
    </recommendedName>
</protein>
<organism>
    <name type="scientific">Bacillus subtilis (strain 168)</name>
    <dbReference type="NCBI Taxonomy" id="224308"/>
    <lineage>
        <taxon>Bacteria</taxon>
        <taxon>Bacillati</taxon>
        <taxon>Bacillota</taxon>
        <taxon>Bacilli</taxon>
        <taxon>Bacillales</taxon>
        <taxon>Bacillaceae</taxon>
        <taxon>Bacillus</taxon>
    </lineage>
</organism>
<name>YJMB_BACSU</name>
<keyword id="KW-1003">Cell membrane</keyword>
<keyword id="KW-0472">Membrane</keyword>
<keyword id="KW-1185">Reference proteome</keyword>
<keyword id="KW-0769">Symport</keyword>
<keyword id="KW-0812">Transmembrane</keyword>
<keyword id="KW-1133">Transmembrane helix</keyword>
<keyword id="KW-0813">Transport</keyword>
<sequence length="459" mass="50421">MRTELANKVVSVETEKRLSLKEKMSYGFGDFGNGFMFDLGQIYLLKYFTDVAGIPAAMAGGIFLVSKLFAAITDPIVGSSIDYRKNIGKRGKFRPYLLIGSIVLAVLTVLIFLSPNVSTTGKLIYAYASYMIWGIGYSFVNIPYGSLGAAMTQNSEDRTSISTFRQIGSLGALFITSVAVMPLLVKFDNPKVGYPVVMGLFAALGVFWFYICYRNCKERIIISEAPKEKLTLSSVVKTFITNKPLLTLVLMTIFSISAYNIKSAMLVYFAQYNLGNVELMAYMNFIIIGSSFLGVVFLPKLVKMFGKKRTAMIGFGISVAADLINFMLPSNVYVFTILASIAFIGISIPNGITWALVSDIIDYGEWKSGERKEATTYSLFNFSRKLAQSLSGFLSGIGLGIIGYVPNAVQTAQALIGIKALLLLYPAIALALAMFIIGFLYKLTDQQHAQIVQDLHQKS</sequence>
<gene>
    <name type="primary">yjmB</name>
    <name type="ordered locus">BSU12310</name>
</gene>